<evidence type="ECO:0000250" key="1">
    <source>
        <dbReference type="UniProtKB" id="O95858"/>
    </source>
</evidence>
<evidence type="ECO:0000250" key="2">
    <source>
        <dbReference type="UniProtKB" id="P62079"/>
    </source>
</evidence>
<evidence type="ECO:0000255" key="3"/>
<evidence type="ECO:0000305" key="4"/>
<name>TSN5_BOVIN</name>
<feature type="chain" id="PRO_0000287713" description="Tetraspanin-5">
    <location>
        <begin position="1"/>
        <end position="268"/>
    </location>
</feature>
<feature type="topological domain" description="Cytoplasmic" evidence="3">
    <location>
        <begin position="1"/>
        <end position="17"/>
    </location>
</feature>
<feature type="transmembrane region" description="Helical" evidence="3">
    <location>
        <begin position="18"/>
        <end position="38"/>
    </location>
</feature>
<feature type="topological domain" description="Extracellular" evidence="3">
    <location>
        <begin position="39"/>
        <end position="61"/>
    </location>
</feature>
<feature type="transmembrane region" description="Helical" evidence="3">
    <location>
        <begin position="62"/>
        <end position="82"/>
    </location>
</feature>
<feature type="topological domain" description="Cytoplasmic" evidence="3">
    <location>
        <begin position="83"/>
        <end position="92"/>
    </location>
</feature>
<feature type="transmembrane region" description="Helical" evidence="3">
    <location>
        <begin position="93"/>
        <end position="113"/>
    </location>
</feature>
<feature type="topological domain" description="Extracellular" evidence="3">
    <location>
        <begin position="114"/>
        <end position="232"/>
    </location>
</feature>
<feature type="transmembrane region" description="Helical" evidence="3">
    <location>
        <begin position="233"/>
        <end position="253"/>
    </location>
</feature>
<feature type="topological domain" description="Cytoplasmic" evidence="3">
    <location>
        <begin position="254"/>
        <end position="268"/>
    </location>
</feature>
<feature type="glycosylation site" description="N-linked (GlcNAc...) asparagine" evidence="3">
    <location>
        <position position="49"/>
    </location>
</feature>
<feature type="glycosylation site" description="N-linked (GlcNAc...) asparagine" evidence="3">
    <location>
        <position position="169"/>
    </location>
</feature>
<feature type="glycosylation site" description="N-linked (GlcNAc...) asparagine" evidence="3">
    <location>
        <position position="174"/>
    </location>
</feature>
<feature type="glycosylation site" description="N-linked (GlcNAc...) asparagine" evidence="3">
    <location>
        <position position="232"/>
    </location>
</feature>
<feature type="disulfide bond" evidence="1">
    <location>
        <begin position="153"/>
        <end position="221"/>
    </location>
</feature>
<feature type="disulfide bond" evidence="1">
    <location>
        <begin position="154"/>
        <end position="186"/>
    </location>
</feature>
<feature type="disulfide bond" evidence="1">
    <location>
        <begin position="170"/>
        <end position="180"/>
    </location>
</feature>
<feature type="disulfide bond" evidence="1">
    <location>
        <begin position="187"/>
        <end position="200"/>
    </location>
</feature>
<protein>
    <recommendedName>
        <fullName>Tetraspanin-5</fullName>
        <shortName>Tspan-5</shortName>
    </recommendedName>
</protein>
<organism>
    <name type="scientific">Bos taurus</name>
    <name type="common">Bovine</name>
    <dbReference type="NCBI Taxonomy" id="9913"/>
    <lineage>
        <taxon>Eukaryota</taxon>
        <taxon>Metazoa</taxon>
        <taxon>Chordata</taxon>
        <taxon>Craniata</taxon>
        <taxon>Vertebrata</taxon>
        <taxon>Euteleostomi</taxon>
        <taxon>Mammalia</taxon>
        <taxon>Eutheria</taxon>
        <taxon>Laurasiatheria</taxon>
        <taxon>Artiodactyla</taxon>
        <taxon>Ruminantia</taxon>
        <taxon>Pecora</taxon>
        <taxon>Bovidae</taxon>
        <taxon>Bovinae</taxon>
        <taxon>Bos</taxon>
    </lineage>
</organism>
<comment type="function">
    <text evidence="2">Part of TspanC8 subgroup, composed of 6 members that interact with the transmembrane metalloprotease ADAM10. This interaction is required for ADAM10 exit from the endoplasmic reticulum and for enzymatic maturation and trafficking to the cell surface as well as substrate specificity. Different TspanC8/ADAM10 complexes have distinct substrates. Promotes ADAM10-mediated cleavage of CD44. Seems to regulate VE-cadherin expression in endothelial cells probably through interaction with ADAM10, promoting leukocyte transmigration.</text>
</comment>
<comment type="subunit">
    <text evidence="2">Interacts with ADAM10; the interaction influences ADAM10 substrate specificity, endocytosis and turnover.</text>
</comment>
<comment type="subcellular location">
    <subcellularLocation>
        <location evidence="2">Cell membrane</location>
        <topology evidence="4">Multi-pass membrane protein</topology>
    </subcellularLocation>
</comment>
<comment type="PTM">
    <text evidence="2">Palmitoylated.</text>
</comment>
<comment type="similarity">
    <text evidence="4">Belongs to the tetraspanin (TM4SF) family.</text>
</comment>
<keyword id="KW-1003">Cell membrane</keyword>
<keyword id="KW-1015">Disulfide bond</keyword>
<keyword id="KW-0325">Glycoprotein</keyword>
<keyword id="KW-0472">Membrane</keyword>
<keyword id="KW-1185">Reference proteome</keyword>
<keyword id="KW-0812">Transmembrane</keyword>
<keyword id="KW-1133">Transmembrane helix</keyword>
<proteinExistence type="evidence at protein level"/>
<accession>Q17QJ5</accession>
<reference key="1">
    <citation type="submission" date="2006-06" db="EMBL/GenBank/DDBJ databases">
        <authorList>
            <consortium name="NIH - Mammalian Gene Collection (MGC) project"/>
        </authorList>
    </citation>
    <scope>NUCLEOTIDE SEQUENCE [LARGE SCALE MRNA]</scope>
    <source>
        <strain>Hereford</strain>
        <tissue>Brain cortex</tissue>
    </source>
</reference>
<reference key="2">
    <citation type="journal article" date="2012" name="J. Biol. Chem.">
        <title>The TspanC8 subgroup of tetraspanins interacts with A disintegrin and metalloprotease 10 (ADAM10) and regulates its maturation and cell surface expression.</title>
        <authorList>
            <person name="Haining E.J."/>
            <person name="Yang J."/>
            <person name="Bailey R.L."/>
            <person name="Khan K."/>
            <person name="Collier R."/>
            <person name="Tsai S."/>
            <person name="Watson S.P."/>
            <person name="Frampton J."/>
            <person name="Garcia P."/>
            <person name="Tomlinson M.G."/>
        </authorList>
    </citation>
    <scope>INTERACTION WITH ADAM10</scope>
</reference>
<sequence>MSGKHYKGPEVSCCIKYFIFGFNVIFWFLGIAFLGIGLWAWNEKGVLSNISSITDLGGFDPVWLFLVVGGVMFILGFAGCIGALRENTFLLKFFSVFLGIIFFLELTAGVLAFVFKDWIKDQLYFFINNNIRAYRDDIDLQNLIDFTQEYWQCCGAFGADDWNLNIYFNCTDSNASRERCGVPFSCCTKDPAEDVINTQCGYDARQKPEVDQQIVIYTKGCVPQFEKWLQDNLTIVAGIFIGIALLQIFGICLAQNLVSDIEAVRASW</sequence>
<dbReference type="EMBL" id="BC118327">
    <property type="protein sequence ID" value="AAI18328.1"/>
    <property type="molecule type" value="mRNA"/>
</dbReference>
<dbReference type="RefSeq" id="NP_001069587.1">
    <property type="nucleotide sequence ID" value="NM_001076119.1"/>
</dbReference>
<dbReference type="SMR" id="Q17QJ5"/>
<dbReference type="FunCoup" id="Q17QJ5">
    <property type="interactions" value="1561"/>
</dbReference>
<dbReference type="STRING" id="9913.ENSBTAP00000016375"/>
<dbReference type="GlyCosmos" id="Q17QJ5">
    <property type="glycosylation" value="4 sites, No reported glycans"/>
</dbReference>
<dbReference type="GlyGen" id="Q17QJ5">
    <property type="glycosylation" value="4 sites"/>
</dbReference>
<dbReference type="PaxDb" id="9913-ENSBTAP00000016375"/>
<dbReference type="Ensembl" id="ENSBTAT00000016375.4">
    <property type="protein sequence ID" value="ENSBTAP00000016375.3"/>
    <property type="gene ID" value="ENSBTAG00000012343.7"/>
</dbReference>
<dbReference type="GeneID" id="538668"/>
<dbReference type="KEGG" id="bta:538668"/>
<dbReference type="CTD" id="10098"/>
<dbReference type="VEuPathDB" id="HostDB:ENSBTAG00000012343"/>
<dbReference type="VGNC" id="VGNC:36440">
    <property type="gene designation" value="TSPAN5"/>
</dbReference>
<dbReference type="eggNOG" id="KOG3882">
    <property type="taxonomic scope" value="Eukaryota"/>
</dbReference>
<dbReference type="GeneTree" id="ENSGT00940000161376"/>
<dbReference type="HOGENOM" id="CLU_055524_0_2_1"/>
<dbReference type="InParanoid" id="Q17QJ5"/>
<dbReference type="OMA" id="DPMYGFI"/>
<dbReference type="OrthoDB" id="2014092at2759"/>
<dbReference type="TreeFam" id="TF313002"/>
<dbReference type="Proteomes" id="UP000009136">
    <property type="component" value="Chromosome 6"/>
</dbReference>
<dbReference type="Bgee" id="ENSBTAG00000012343">
    <property type="expression patterns" value="Expressed in semen and 102 other cell types or tissues"/>
</dbReference>
<dbReference type="GO" id="GO:0005886">
    <property type="term" value="C:plasma membrane"/>
    <property type="evidence" value="ECO:0000250"/>
    <property type="project" value="UniProtKB"/>
</dbReference>
<dbReference type="GO" id="GO:0051043">
    <property type="term" value="P:regulation of membrane protein ectodomain proteolysis"/>
    <property type="evidence" value="ECO:0000250"/>
    <property type="project" value="UniProtKB"/>
</dbReference>
<dbReference type="CDD" id="cd03159">
    <property type="entry name" value="TM4SF9_like_LEL"/>
    <property type="match status" value="1"/>
</dbReference>
<dbReference type="FunFam" id="1.10.1450.10:FF:000001">
    <property type="entry name" value="Tetraspanin"/>
    <property type="match status" value="1"/>
</dbReference>
<dbReference type="Gene3D" id="1.10.1450.10">
    <property type="entry name" value="Tetraspanin"/>
    <property type="match status" value="1"/>
</dbReference>
<dbReference type="InterPro" id="IPR018499">
    <property type="entry name" value="Tetraspanin/Peripherin"/>
</dbReference>
<dbReference type="InterPro" id="IPR000301">
    <property type="entry name" value="Tetraspanin_animals"/>
</dbReference>
<dbReference type="InterPro" id="IPR018503">
    <property type="entry name" value="Tetraspanin_CS"/>
</dbReference>
<dbReference type="InterPro" id="IPR008952">
    <property type="entry name" value="Tetraspanin_EC2_sf"/>
</dbReference>
<dbReference type="PANTHER" id="PTHR19282">
    <property type="entry name" value="TETRASPANIN"/>
    <property type="match status" value="1"/>
</dbReference>
<dbReference type="PANTHER" id="PTHR19282:SF63">
    <property type="entry name" value="TETRASPANIN-5"/>
    <property type="match status" value="1"/>
</dbReference>
<dbReference type="Pfam" id="PF00335">
    <property type="entry name" value="Tetraspanin"/>
    <property type="match status" value="1"/>
</dbReference>
<dbReference type="PIRSF" id="PIRSF002419">
    <property type="entry name" value="Tetraspanin"/>
    <property type="match status" value="1"/>
</dbReference>
<dbReference type="PRINTS" id="PR00259">
    <property type="entry name" value="TMFOUR"/>
</dbReference>
<dbReference type="SUPFAM" id="SSF48652">
    <property type="entry name" value="Tetraspanin"/>
    <property type="match status" value="1"/>
</dbReference>
<dbReference type="PROSITE" id="PS00421">
    <property type="entry name" value="TM4_1"/>
    <property type="match status" value="1"/>
</dbReference>
<gene>
    <name type="primary">TSPAN5</name>
</gene>